<comment type="function">
    <text evidence="1">Acts as a glycogen-targeting subunit for phosphatase PP1. Facilitates interaction of the PP1 with enzymes of the glycogen metabolism and regulates its activity. Suppresses the rate at which PP1 dephosphorylates (inactivates) glycogen phosphorylase and enhances the rate at which it activates glycogen synthase and therefore limits glycogen breakdown (By similarity).</text>
</comment>
<comment type="subunit">
    <text evidence="1">Interacts with glycogen, PPP1CC catalytic subunit of PP1 and PYGL. Associates with glycogen particles. Forms complexes with debranching enzyme, glycogen phosphorylase, glycogen synthase and phosphorylase kinase which is necessary for its regulation of PP1 activity (By similarity).</text>
</comment>
<comment type="domain">
    <text evidence="1">The N-terminal region is required for binding to PP1, the central region is required for binding to glycogen and the C-terminal region is required for binding to PYGL.</text>
</comment>
<organism>
    <name type="scientific">Xenopus laevis</name>
    <name type="common">African clawed frog</name>
    <dbReference type="NCBI Taxonomy" id="8355"/>
    <lineage>
        <taxon>Eukaryota</taxon>
        <taxon>Metazoa</taxon>
        <taxon>Chordata</taxon>
        <taxon>Craniata</taxon>
        <taxon>Vertebrata</taxon>
        <taxon>Euteleostomi</taxon>
        <taxon>Amphibia</taxon>
        <taxon>Batrachia</taxon>
        <taxon>Anura</taxon>
        <taxon>Pipoidea</taxon>
        <taxon>Pipidae</taxon>
        <taxon>Xenopodinae</taxon>
        <taxon>Xenopus</taxon>
        <taxon>Xenopus</taxon>
    </lineage>
</organism>
<name>PP3BA_XENLA</name>
<gene>
    <name type="primary">ppp1r3b-a</name>
</gene>
<feature type="chain" id="PRO_0000324547" description="Protein phosphatase 1 regulatory subunit 3B-A">
    <location>
        <begin position="1"/>
        <end position="280"/>
    </location>
</feature>
<feature type="domain" description="CBM21" evidence="2">
    <location>
        <begin position="121"/>
        <end position="229"/>
    </location>
</feature>
<feature type="short sequence motif" description="PP1-binding motif">
    <location>
        <begin position="58"/>
        <end position="61"/>
    </location>
</feature>
<reference key="1">
    <citation type="submission" date="2005-02" db="EMBL/GenBank/DDBJ databases">
        <authorList>
            <consortium name="NIH - Xenopus Gene Collection (XGC) project"/>
        </authorList>
    </citation>
    <scope>NUCLEOTIDE SEQUENCE [LARGE SCALE MRNA]</scope>
    <source>
        <tissue>Egg</tissue>
    </source>
</reference>
<sequence length="280" mass="32544">MAVDIAMKFYLRSPPLRRDRVECRIARKSNEPLRPCIQTTDKTLLSELSNQENKVKKRVSFADSRGLALTMVKVYSDFDDELEIPFNISELIDNIVNLTTVEKERFVLDFVQPSADYLDFRNRLQADSVCLENCMLKDKALVGTVKVKNLAFQKCVKIRMTFDSWQTYTDYDCQYVKDTYAGSDKDTFSFDVSLPEGIQSNTRIEFAVYFECEGRIFWDSNKSLNYKIARQDHRIPSNFESRHYDPVCMSVDQYGSPRCSYGIFPELPTYSGFDKLGPYY</sequence>
<evidence type="ECO:0000250" key="1"/>
<evidence type="ECO:0000255" key="2">
    <source>
        <dbReference type="PROSITE-ProRule" id="PRU00491"/>
    </source>
</evidence>
<accession>Q5BL87</accession>
<protein>
    <recommendedName>
        <fullName>Protein phosphatase 1 regulatory subunit 3B-A</fullName>
    </recommendedName>
</protein>
<keyword id="KW-0119">Carbohydrate metabolism</keyword>
<keyword id="KW-0321">Glycogen metabolism</keyword>
<keyword id="KW-1185">Reference proteome</keyword>
<dbReference type="EMBL" id="BC090563">
    <property type="protein sequence ID" value="AAH90563.1"/>
    <property type="molecule type" value="mRNA"/>
</dbReference>
<dbReference type="RefSeq" id="NP_001089995.1">
    <property type="nucleotide sequence ID" value="NM_001096526.1"/>
</dbReference>
<dbReference type="SMR" id="Q5BL87"/>
<dbReference type="CAZy" id="CBM21">
    <property type="family name" value="Carbohydrate-Binding Module Family 21"/>
</dbReference>
<dbReference type="DNASU" id="735066"/>
<dbReference type="GeneID" id="735066"/>
<dbReference type="KEGG" id="xla:735066"/>
<dbReference type="AGR" id="Xenbase:XB-GENE-6078118"/>
<dbReference type="CTD" id="735066"/>
<dbReference type="Xenbase" id="XB-GENE-6078118">
    <property type="gene designation" value="ppp1r3b.L"/>
</dbReference>
<dbReference type="OrthoDB" id="8942186at2759"/>
<dbReference type="Proteomes" id="UP000186698">
    <property type="component" value="Chromosome 1L"/>
</dbReference>
<dbReference type="Bgee" id="735066">
    <property type="expression patterns" value="Expressed in egg cell and 19 other cell types or tissues"/>
</dbReference>
<dbReference type="GO" id="GO:0000164">
    <property type="term" value="C:protein phosphatase type 1 complex"/>
    <property type="evidence" value="ECO:0000318"/>
    <property type="project" value="GO_Central"/>
</dbReference>
<dbReference type="GO" id="GO:2001069">
    <property type="term" value="F:glycogen binding"/>
    <property type="evidence" value="ECO:0000318"/>
    <property type="project" value="GO_Central"/>
</dbReference>
<dbReference type="GO" id="GO:0008157">
    <property type="term" value="F:protein phosphatase 1 binding"/>
    <property type="evidence" value="ECO:0000318"/>
    <property type="project" value="GO_Central"/>
</dbReference>
<dbReference type="GO" id="GO:0019888">
    <property type="term" value="F:protein phosphatase regulator activity"/>
    <property type="evidence" value="ECO:0007669"/>
    <property type="project" value="InterPro"/>
</dbReference>
<dbReference type="GO" id="GO:0005977">
    <property type="term" value="P:glycogen metabolic process"/>
    <property type="evidence" value="ECO:0007669"/>
    <property type="project" value="UniProtKB-KW"/>
</dbReference>
<dbReference type="GO" id="GO:0005979">
    <property type="term" value="P:regulation of glycogen biosynthetic process"/>
    <property type="evidence" value="ECO:0000318"/>
    <property type="project" value="GO_Central"/>
</dbReference>
<dbReference type="GO" id="GO:0005981">
    <property type="term" value="P:regulation of glycogen catabolic process"/>
    <property type="evidence" value="ECO:0007669"/>
    <property type="project" value="InterPro"/>
</dbReference>
<dbReference type="CDD" id="cd22814">
    <property type="entry name" value="PBD_PPP1R3B"/>
    <property type="match status" value="1"/>
</dbReference>
<dbReference type="FunFam" id="2.60.40.2440:FF:000001">
    <property type="entry name" value="Protein phosphatase 1 regulatory subunit 3C"/>
    <property type="match status" value="1"/>
</dbReference>
<dbReference type="Gene3D" id="2.60.40.2440">
    <property type="entry name" value="Carbohydrate binding type-21 domain"/>
    <property type="match status" value="1"/>
</dbReference>
<dbReference type="InterPro" id="IPR005036">
    <property type="entry name" value="CBM21_dom"/>
</dbReference>
<dbReference type="InterPro" id="IPR038175">
    <property type="entry name" value="CBM21_dom_sf"/>
</dbReference>
<dbReference type="InterPro" id="IPR017434">
    <property type="entry name" value="Pase-1_reg-su_3B/C/D_met"/>
</dbReference>
<dbReference type="InterPro" id="IPR030682">
    <property type="entry name" value="PP1_3B"/>
</dbReference>
<dbReference type="InterPro" id="IPR050782">
    <property type="entry name" value="PP1_regulatory_subunit_3"/>
</dbReference>
<dbReference type="PANTHER" id="PTHR12307">
    <property type="entry name" value="PROTEIN PHOSPHATASE 1 REGULATORY SUBUNIT"/>
    <property type="match status" value="1"/>
</dbReference>
<dbReference type="PANTHER" id="PTHR12307:SF13">
    <property type="entry name" value="PROTEIN PHOSPHATASE 1 REGULATORY SUBUNIT 3B"/>
    <property type="match status" value="1"/>
</dbReference>
<dbReference type="Pfam" id="PF03370">
    <property type="entry name" value="CBM_21"/>
    <property type="match status" value="1"/>
</dbReference>
<dbReference type="PIRSF" id="PIRSF500814">
    <property type="entry name" value="PP1_GL"/>
    <property type="match status" value="1"/>
</dbReference>
<dbReference type="PIRSF" id="PIRSF038207">
    <property type="entry name" value="PP1_GT_animal"/>
    <property type="match status" value="1"/>
</dbReference>
<dbReference type="PROSITE" id="PS51159">
    <property type="entry name" value="CBM21"/>
    <property type="match status" value="1"/>
</dbReference>
<proteinExistence type="evidence at transcript level"/>